<accession>P73911</accession>
<accession>P97083</accession>
<accession>Q79EX5</accession>
<name>KATG_SYNY3</name>
<reference key="1">
    <citation type="submission" date="1996-03" db="EMBL/GenBank/DDBJ databases">
        <title>Nucleotide sequence of katG of Synechocystis sp. PCC 6803.</title>
        <authorList>
            <person name="Ushimaru T."/>
            <person name="Hayashi H."/>
            <person name="Murata N."/>
        </authorList>
    </citation>
    <scope>NUCLEOTIDE SEQUENCE [GENOMIC DNA]</scope>
</reference>
<reference key="2">
    <citation type="journal article" date="1996" name="DNA Res.">
        <title>Sequence analysis of the genome of the unicellular cyanobacterium Synechocystis sp. strain PCC6803. II. Sequence determination of the entire genome and assignment of potential protein-coding regions.</title>
        <authorList>
            <person name="Kaneko T."/>
            <person name="Sato S."/>
            <person name="Kotani H."/>
            <person name="Tanaka A."/>
            <person name="Asamizu E."/>
            <person name="Nakamura Y."/>
            <person name="Miyajima N."/>
            <person name="Hirosawa M."/>
            <person name="Sugiura M."/>
            <person name="Sasamoto S."/>
            <person name="Kimura T."/>
            <person name="Hosouchi T."/>
            <person name="Matsuno A."/>
            <person name="Muraki A."/>
            <person name="Nakazaki N."/>
            <person name="Naruo K."/>
            <person name="Okumura S."/>
            <person name="Shimpo S."/>
            <person name="Takeuchi C."/>
            <person name="Wada T."/>
            <person name="Watanabe A."/>
            <person name="Yamada M."/>
            <person name="Yasuda M."/>
            <person name="Tabata S."/>
        </authorList>
    </citation>
    <scope>NUCLEOTIDE SEQUENCE [LARGE SCALE GENOMIC DNA]</scope>
    <source>
        <strain>ATCC 27184 / PCC 6803 / Kazusa</strain>
    </source>
</reference>
<reference key="3">
    <citation type="journal article" date="1999" name="Biol. Chem.">
        <title>Catalase-peroxidase from the cyanobacterium Synechocystis PCC 6803: cloning, overexpression in Escherichia coli, and kinetic characterization.</title>
        <authorList>
            <person name="Jakopitsch C."/>
            <person name="Ruker F."/>
            <person name="Regelsberger G."/>
            <person name="Dockal M."/>
            <person name="Peschek G.A."/>
            <person name="Obinger C."/>
        </authorList>
    </citation>
    <scope>BIOPHYSICOCHEMICAL PROPERTIES</scope>
    <scope>HEME-BINDING</scope>
    <scope>SUBUNIT</scope>
    <scope>MASS SPECTROMETRY</scope>
</reference>
<reference key="4">
    <citation type="journal article" date="1999" name="FEMS Microbiol. Lett.">
        <title>Purification and characterization of a hydroperoxidase from the cyanobacterium Synechocystis PCC 6803: identification of its gene by peptide mass mapping using matrix assisted laser desorption ionization time-of-flight mass spectrometry.</title>
        <authorList>
            <person name="Regelsberger G."/>
            <person name="Obinger C."/>
            <person name="Zoder R."/>
            <person name="Altmann F."/>
            <person name="Peschek G.A."/>
        </authorList>
    </citation>
    <scope>BIOPHYSICOCHEMICAL PROPERTIES</scope>
    <scope>HEME-BINDING</scope>
    <scope>SUBUNIT</scope>
</reference>
<reference key="5">
    <citation type="journal article" date="2003" name="FEBS Lett.">
        <title>Distal side tryptophan, tyrosine and methionine in catalase-peroxidases are covalently linked in solution.</title>
        <authorList>
            <person name="Jakopitsch C."/>
            <person name="Kolarich D."/>
            <person name="Petutschnig G."/>
            <person name="Furtmueller P.G."/>
            <person name="Obinger C."/>
        </authorList>
    </citation>
    <scope>COVALENT BOND</scope>
</reference>
<reference key="6">
    <citation type="journal article" date="2003" name="J. Am. Chem. Soc.">
        <title>Protein-based radicals in the catalase-peroxidase of synechocystis PCC6803: a multifrequency EPR investigation of wild-type and variants on the environment of the heme active site.</title>
        <authorList>
            <person name="Ivancich A."/>
            <person name="Jakopitsch C."/>
            <person name="Auer M."/>
            <person name="Un S."/>
            <person name="Obinger C."/>
        </authorList>
    </citation>
    <scope>RADICAL INTERMEDIATE</scope>
</reference>
<reference key="7">
    <citation type="journal article" date="2006" name="J. Inorg. Biochem.">
        <title>Identification of Trp106 as the tryptophanyl radical intermediate in Synechocystis PCC6803 catalase-peroxidase by multifrequency electron paramagnetic resonance spectroscopy.</title>
        <authorList>
            <person name="Jakopitsch C."/>
            <person name="Obinger C."/>
            <person name="Un S."/>
            <person name="Ivancich A."/>
        </authorList>
    </citation>
    <scope>RADICAL INTERMEDIATE</scope>
</reference>
<reference key="8">
    <citation type="journal article" date="2007" name="Biochemistry">
        <title>Redox intermediates in the catalase cycle of catalase-peroxidases from Synechocystis PCC 6803, Burkholderia pseudomallei, and Mycobacterium tuberculosis.</title>
        <authorList>
            <person name="Jakopitsch C."/>
            <person name="Vlasits J."/>
            <person name="Wiseman B."/>
            <person name="Loewen P.C."/>
            <person name="Obinger C."/>
        </authorList>
    </citation>
    <scope>CATALYTIC MECHANISM</scope>
</reference>
<reference key="9">
    <citation type="journal article" date="2008" name="Arch. Biochem. Biophys.">
        <title>Comparative study of catalase-peroxidases (KatGs).</title>
        <authorList>
            <person name="Singh R."/>
            <person name="Wiseman B."/>
            <person name="Deemagarn T."/>
            <person name="Jha V."/>
            <person name="Switala J."/>
            <person name="Loewen P.C."/>
        </authorList>
    </citation>
    <scope>BIOPHYSICOCHEMICAL PROPERTIES</scope>
</reference>
<organism>
    <name type="scientific">Synechocystis sp. (strain ATCC 27184 / PCC 6803 / Kazusa)</name>
    <dbReference type="NCBI Taxonomy" id="1111708"/>
    <lineage>
        <taxon>Bacteria</taxon>
        <taxon>Bacillati</taxon>
        <taxon>Cyanobacteriota</taxon>
        <taxon>Cyanophyceae</taxon>
        <taxon>Synechococcales</taxon>
        <taxon>Merismopediaceae</taxon>
        <taxon>Synechocystis</taxon>
    </lineage>
</organism>
<protein>
    <recommendedName>
        <fullName evidence="1">Catalase-peroxidase</fullName>
        <shortName evidence="1">CP</shortName>
        <ecNumber evidence="1">1.11.1.21</ecNumber>
    </recommendedName>
    <alternativeName>
        <fullName evidence="1">Peroxidase/catalase</fullName>
    </alternativeName>
</protein>
<evidence type="ECO:0000255" key="1">
    <source>
        <dbReference type="HAMAP-Rule" id="MF_01961"/>
    </source>
</evidence>
<evidence type="ECO:0000256" key="2">
    <source>
        <dbReference type="SAM" id="MobiDB-lite"/>
    </source>
</evidence>
<evidence type="ECO:0000269" key="3">
    <source>
    </source>
</evidence>
<evidence type="ECO:0000269" key="4">
    <source>
    </source>
</evidence>
<evidence type="ECO:0000269" key="5">
    <source>
    </source>
</evidence>
<evidence type="ECO:0000269" key="6">
    <source>
    </source>
</evidence>
<evidence type="ECO:0000269" key="7">
    <source>
    </source>
</evidence>
<keyword id="KW-0349">Heme</keyword>
<keyword id="KW-0376">Hydrogen peroxide</keyword>
<keyword id="KW-0408">Iron</keyword>
<keyword id="KW-0479">Metal-binding</keyword>
<keyword id="KW-0556">Organic radical</keyword>
<keyword id="KW-0560">Oxidoreductase</keyword>
<keyword id="KW-0575">Peroxidase</keyword>
<keyword id="KW-1185">Reference proteome</keyword>
<sequence length="754" mass="84446">MGTQPARKLRNRVFPHPHNHRKEKPMANDQVPASKCPVMHGANTTGQNGNLNWWPNALNLDILHQHDRKTNPMDDGFNYAEAFQQLDLAAVKQDLHHLMTDSQSWWPADWGHYGGLMIRMAWHAAGTYRIADGRGGAATGNQRFAPLNSWPDNVNLDKARRLLWPIKKKYGNKLSWGDLIILAGTMAYESMGLKVYGFAGGREDIWHPEKDIYWGAEKEWLASSDHRYGSEDRESLENPLAAVQMGLIYVNPEGVDGHPDPLCTAQDVRTTFARMAMNDEETVALTAGGHTVGKCHGNSKAELIGPEPEGADVVEQGLGWHNQNGKGVGRETMSSGIEGAWTTHPTQWDNGYFYMLFNHEWELKKSPAGAWQWEPVNIKEEDKPVDVEDPNIRHNPIMTDADMAMIKDPIYRQISERFYREPDYFAEVFAKAWFKLTHRDLGPKSRYLGPDVPQEDLIWQDPIPPVDYTLSEGEIKELEQQILASGLTVSELVCTAWDSARTFRSSDYRGGANGARIRLEPQKNWPGNEPTRLAKVLAVLENIQANFAKPVSLADLIVLGGGAAIAKAALDGGIEVNVPFLPGRGDATQAMTDAESFTPLEPIHDGYRNWLKQDYAVSPEELLLERTQLMGLTAPEMTVLIGGMRVLGTNHGGTKHGVFTDRVGVLSNDFFVNLTDMAYQWRPAGNNLYEIGDRQTGEVKWTATKVDLVFGSNSILRSYAEVYAQDDNREKFVRDFVAAWTKVMNADRFDLPRG</sequence>
<comment type="function">
    <text>Bifunctional enzyme with both catalase and broad-spectrum peroxidase activity. Also displays NADH oxidase, isoniazid hydrazine lyase and isonicotinoyl-NAD synthase activities.</text>
</comment>
<comment type="catalytic activity">
    <reaction evidence="1">
        <text>H2O2 + AH2 = A + 2 H2O</text>
        <dbReference type="Rhea" id="RHEA:30275"/>
        <dbReference type="ChEBI" id="CHEBI:13193"/>
        <dbReference type="ChEBI" id="CHEBI:15377"/>
        <dbReference type="ChEBI" id="CHEBI:16240"/>
        <dbReference type="ChEBI" id="CHEBI:17499"/>
        <dbReference type="EC" id="1.11.1.21"/>
    </reaction>
</comment>
<comment type="catalytic activity">
    <reaction evidence="1">
        <text>2 H2O2 = O2 + 2 H2O</text>
        <dbReference type="Rhea" id="RHEA:20309"/>
        <dbReference type="ChEBI" id="CHEBI:15377"/>
        <dbReference type="ChEBI" id="CHEBI:15379"/>
        <dbReference type="ChEBI" id="CHEBI:16240"/>
        <dbReference type="EC" id="1.11.1.21"/>
    </reaction>
</comment>
<comment type="cofactor">
    <cofactor>
        <name>heme b</name>
        <dbReference type="ChEBI" id="CHEBI:60344"/>
    </cofactor>
    <text>Binds 1 heme b (iron(II)-protoporphyrin IX) group per dimer.</text>
</comment>
<comment type="biophysicochemical properties">
    <kinetics>
        <KM evidence="3 6 7">20 mM for H(2)O(2) for the catalase reaction (at pH 5.5-6.0)</KM>
        <KM evidence="3 6 7">3.1 mM for H(2)O(2) for the catalase reaction (at pH 7.0)</KM>
        <KM evidence="3 6 7">1000 uM for H(2)O(2) for the peroxidase reaction</KM>
        <KM evidence="3 6 7">7 uM for ABTS for the peroxidase reaction</KM>
        <Vmax evidence="3 6 7">6000.0 umol/min/mg enzyme for H(2)O(2) for the catalase reaction (at pH 5.5-6.0)</Vmax>
        <Vmax evidence="3 6 7">5400.0 umol/min/mg enzyme for H(2)O(2) for the catalase reaction (at pH 7.0)</Vmax>
        <Vmax evidence="3 6 7">9.3 umol/min/mg enzyme for ABTS for the peroxidase reaction</Vmax>
    </kinetics>
    <phDependence>
        <text evidence="3 6 7">Optimum pH is 4.25 for the peroxidase reaction and 6.5 for the catalase reaction.</text>
    </phDependence>
</comment>
<comment type="subunit">
    <text evidence="3 7">Homodimer.</text>
</comment>
<comment type="PTM">
    <text evidence="1">Formation of the three residue Trp-Tyr-Met cross-link is important for the catalase, but not the peroxidase activity of the enzyme.</text>
</comment>
<comment type="mass spectrometry" mass="85122.0" method="MALDI" evidence="3">
    <text>Reported mass includes mass of a C-terminal His6 tag, expressed in E.coli.</text>
</comment>
<comment type="miscellaneous">
    <text>In contrast to the M.tuberculosis enzyme, no Trp radical is formed on the proximal Trp residue (Trp-341).</text>
</comment>
<comment type="similarity">
    <text evidence="1">Belongs to the peroxidase family. Peroxidase/catalase subfamily.</text>
</comment>
<dbReference type="EC" id="1.11.1.21" evidence="1"/>
<dbReference type="EMBL" id="D83990">
    <property type="protein sequence ID" value="BAA20459.1"/>
    <property type="molecule type" value="Genomic_DNA"/>
</dbReference>
<dbReference type="EMBL" id="BA000022">
    <property type="protein sequence ID" value="BAA17975.1"/>
    <property type="molecule type" value="Genomic_DNA"/>
</dbReference>
<dbReference type="PIR" id="S75113">
    <property type="entry name" value="S75113"/>
</dbReference>
<dbReference type="SMR" id="P73911"/>
<dbReference type="IntAct" id="P73911">
    <property type="interactions" value="8"/>
</dbReference>
<dbReference type="STRING" id="1148.gene:10498844"/>
<dbReference type="PeroxiBase" id="2479">
    <property type="entry name" value="SYspCP01_PCC6803"/>
</dbReference>
<dbReference type="PaxDb" id="1148-1653058"/>
<dbReference type="EnsemblBacteria" id="BAA17975">
    <property type="protein sequence ID" value="BAA17975"/>
    <property type="gene ID" value="BAA17975"/>
</dbReference>
<dbReference type="KEGG" id="syn:sll1987"/>
<dbReference type="eggNOG" id="COG0376">
    <property type="taxonomic scope" value="Bacteria"/>
</dbReference>
<dbReference type="InParanoid" id="P73911"/>
<dbReference type="PhylomeDB" id="P73911"/>
<dbReference type="BRENDA" id="1.11.1.21">
    <property type="organism ID" value="382"/>
</dbReference>
<dbReference type="SABIO-RK" id="P73911"/>
<dbReference type="Proteomes" id="UP000001425">
    <property type="component" value="Chromosome"/>
</dbReference>
<dbReference type="GO" id="GO:0004096">
    <property type="term" value="F:catalase activity"/>
    <property type="evidence" value="ECO:0007669"/>
    <property type="project" value="UniProtKB-UniRule"/>
</dbReference>
<dbReference type="GO" id="GO:0020037">
    <property type="term" value="F:heme binding"/>
    <property type="evidence" value="ECO:0007669"/>
    <property type="project" value="InterPro"/>
</dbReference>
<dbReference type="GO" id="GO:0046872">
    <property type="term" value="F:metal ion binding"/>
    <property type="evidence" value="ECO:0007669"/>
    <property type="project" value="UniProtKB-KW"/>
</dbReference>
<dbReference type="GO" id="GO:0042744">
    <property type="term" value="P:hydrogen peroxide catabolic process"/>
    <property type="evidence" value="ECO:0007669"/>
    <property type="project" value="UniProtKB-KW"/>
</dbReference>
<dbReference type="GO" id="GO:0006979">
    <property type="term" value="P:response to oxidative stress"/>
    <property type="evidence" value="ECO:0007669"/>
    <property type="project" value="InterPro"/>
</dbReference>
<dbReference type="CDD" id="cd00649">
    <property type="entry name" value="catalase_peroxidase_1"/>
    <property type="match status" value="1"/>
</dbReference>
<dbReference type="CDD" id="cd08200">
    <property type="entry name" value="catalase_peroxidase_2"/>
    <property type="match status" value="1"/>
</dbReference>
<dbReference type="FunFam" id="1.10.420.10:FF:000004">
    <property type="entry name" value="Catalase-peroxidase"/>
    <property type="match status" value="1"/>
</dbReference>
<dbReference type="FunFam" id="1.10.520.10:FF:000002">
    <property type="entry name" value="Catalase-peroxidase"/>
    <property type="match status" value="1"/>
</dbReference>
<dbReference type="Gene3D" id="1.10.520.10">
    <property type="match status" value="2"/>
</dbReference>
<dbReference type="Gene3D" id="1.10.420.10">
    <property type="entry name" value="Peroxidase, domain 2"/>
    <property type="match status" value="2"/>
</dbReference>
<dbReference type="HAMAP" id="MF_01961">
    <property type="entry name" value="Catal_peroxid"/>
    <property type="match status" value="1"/>
</dbReference>
<dbReference type="InterPro" id="IPR000763">
    <property type="entry name" value="Catalase_peroxidase"/>
</dbReference>
<dbReference type="InterPro" id="IPR002016">
    <property type="entry name" value="Haem_peroxidase"/>
</dbReference>
<dbReference type="InterPro" id="IPR010255">
    <property type="entry name" value="Haem_peroxidase_sf"/>
</dbReference>
<dbReference type="InterPro" id="IPR019794">
    <property type="entry name" value="Peroxidases_AS"/>
</dbReference>
<dbReference type="NCBIfam" id="TIGR00198">
    <property type="entry name" value="cat_per_HPI"/>
    <property type="match status" value="1"/>
</dbReference>
<dbReference type="NCBIfam" id="NF011635">
    <property type="entry name" value="PRK15061.1"/>
    <property type="match status" value="1"/>
</dbReference>
<dbReference type="PANTHER" id="PTHR30555:SF6">
    <property type="entry name" value="CATALASE-PEROXIDASE"/>
    <property type="match status" value="1"/>
</dbReference>
<dbReference type="PANTHER" id="PTHR30555">
    <property type="entry name" value="HYDROPEROXIDASE I, BIFUNCTIONAL CATALASE-PEROXIDASE"/>
    <property type="match status" value="1"/>
</dbReference>
<dbReference type="Pfam" id="PF00141">
    <property type="entry name" value="peroxidase"/>
    <property type="match status" value="2"/>
</dbReference>
<dbReference type="PRINTS" id="PR00460">
    <property type="entry name" value="BPEROXIDASE"/>
</dbReference>
<dbReference type="PRINTS" id="PR00458">
    <property type="entry name" value="PEROXIDASE"/>
</dbReference>
<dbReference type="SUPFAM" id="SSF48113">
    <property type="entry name" value="Heme-dependent peroxidases"/>
    <property type="match status" value="2"/>
</dbReference>
<dbReference type="PROSITE" id="PS00436">
    <property type="entry name" value="PEROXIDASE_2"/>
    <property type="match status" value="1"/>
</dbReference>
<dbReference type="PROSITE" id="PS50873">
    <property type="entry name" value="PEROXIDASE_4"/>
    <property type="match status" value="2"/>
</dbReference>
<gene>
    <name evidence="1" type="primary">katG</name>
    <name type="ordered locus">sll1987</name>
</gene>
<feature type="initiator methionine" description="Removed">
    <location>
        <position position="1"/>
    </location>
</feature>
<feature type="chain" id="PRO_0000345096" description="Catalase-peroxidase">
    <location>
        <begin position="2"/>
        <end position="754"/>
    </location>
</feature>
<feature type="region of interest" description="Disordered" evidence="2">
    <location>
        <begin position="1"/>
        <end position="29"/>
    </location>
</feature>
<feature type="compositionally biased region" description="Basic residues" evidence="2">
    <location>
        <begin position="7"/>
        <end position="23"/>
    </location>
</feature>
<feature type="active site" description="Tryptophan radical intermediate" evidence="4 5">
    <location>
        <position position="106"/>
    </location>
</feature>
<feature type="active site" description="Proton acceptor" evidence="1">
    <location>
        <position position="123"/>
    </location>
</feature>
<feature type="binding site" description="axial binding residue" evidence="1">
    <location>
        <position position="290"/>
    </location>
    <ligand>
        <name>heme b</name>
        <dbReference type="ChEBI" id="CHEBI:60344"/>
    </ligand>
    <ligandPart>
        <name>Fe</name>
        <dbReference type="ChEBI" id="CHEBI:18248"/>
    </ligandPart>
</feature>
<feature type="site" description="Transition state stabilizer" evidence="1">
    <location>
        <position position="119"/>
    </location>
</feature>
<feature type="cross-link" description="Tryptophyl-tyrosyl-methioninium (Trp-Tyr) (with M-275)">
    <location>
        <begin position="122"/>
        <end position="249"/>
    </location>
</feature>
<feature type="cross-link" description="Tryptophyl-tyrosyl-methioninium (Tyr-Met) (with W-122)">
    <location>
        <begin position="249"/>
        <end position="275"/>
    </location>
</feature>
<proteinExistence type="evidence at protein level"/>